<organism>
    <name type="scientific">Rhizobium johnstonii (strain DSM 114642 / LMG 32736 / 3841)</name>
    <name type="common">Rhizobium leguminosarum bv. viciae</name>
    <dbReference type="NCBI Taxonomy" id="216596"/>
    <lineage>
        <taxon>Bacteria</taxon>
        <taxon>Pseudomonadati</taxon>
        <taxon>Pseudomonadota</taxon>
        <taxon>Alphaproteobacteria</taxon>
        <taxon>Hyphomicrobiales</taxon>
        <taxon>Rhizobiaceae</taxon>
        <taxon>Rhizobium/Agrobacterium group</taxon>
        <taxon>Rhizobium</taxon>
        <taxon>Rhizobium johnstonii</taxon>
    </lineage>
</organism>
<comment type="function">
    <text evidence="1">Promotes RNA polymerase assembly. Latches the N- and C-terminal regions of the beta' subunit thereby facilitating its interaction with the beta and alpha subunits.</text>
</comment>
<comment type="catalytic activity">
    <reaction evidence="1">
        <text>RNA(n) + a ribonucleoside 5'-triphosphate = RNA(n+1) + diphosphate</text>
        <dbReference type="Rhea" id="RHEA:21248"/>
        <dbReference type="Rhea" id="RHEA-COMP:14527"/>
        <dbReference type="Rhea" id="RHEA-COMP:17342"/>
        <dbReference type="ChEBI" id="CHEBI:33019"/>
        <dbReference type="ChEBI" id="CHEBI:61557"/>
        <dbReference type="ChEBI" id="CHEBI:140395"/>
        <dbReference type="EC" id="2.7.7.6"/>
    </reaction>
</comment>
<comment type="subunit">
    <text evidence="1">The RNAP catalytic core consists of 2 alpha, 1 beta, 1 beta' and 1 omega subunit. When a sigma factor is associated with the core the holoenzyme is formed, which can initiate transcription.</text>
</comment>
<comment type="similarity">
    <text evidence="1">Belongs to the RNA polymerase subunit omega family.</text>
</comment>
<dbReference type="EC" id="2.7.7.6" evidence="1"/>
<dbReference type="EMBL" id="AM236080">
    <property type="protein sequence ID" value="CAK07000.1"/>
    <property type="molecule type" value="Genomic_DNA"/>
</dbReference>
<dbReference type="RefSeq" id="WP_003546928.1">
    <property type="nucleotide sequence ID" value="NC_008380.1"/>
</dbReference>
<dbReference type="SMR" id="Q1MJ60"/>
<dbReference type="EnsemblBacteria" id="CAK07000">
    <property type="protein sequence ID" value="CAK07000"/>
    <property type="gene ID" value="RL1505"/>
</dbReference>
<dbReference type="KEGG" id="rle:RL1505"/>
<dbReference type="eggNOG" id="COG1758">
    <property type="taxonomic scope" value="Bacteria"/>
</dbReference>
<dbReference type="HOGENOM" id="CLU_125406_2_0_5"/>
<dbReference type="Proteomes" id="UP000006575">
    <property type="component" value="Chromosome"/>
</dbReference>
<dbReference type="GO" id="GO:0000428">
    <property type="term" value="C:DNA-directed RNA polymerase complex"/>
    <property type="evidence" value="ECO:0007669"/>
    <property type="project" value="UniProtKB-KW"/>
</dbReference>
<dbReference type="GO" id="GO:0003677">
    <property type="term" value="F:DNA binding"/>
    <property type="evidence" value="ECO:0007669"/>
    <property type="project" value="UniProtKB-UniRule"/>
</dbReference>
<dbReference type="GO" id="GO:0003899">
    <property type="term" value="F:DNA-directed RNA polymerase activity"/>
    <property type="evidence" value="ECO:0007669"/>
    <property type="project" value="UniProtKB-UniRule"/>
</dbReference>
<dbReference type="GO" id="GO:0006351">
    <property type="term" value="P:DNA-templated transcription"/>
    <property type="evidence" value="ECO:0007669"/>
    <property type="project" value="UniProtKB-UniRule"/>
</dbReference>
<dbReference type="Gene3D" id="3.90.940.10">
    <property type="match status" value="1"/>
</dbReference>
<dbReference type="HAMAP" id="MF_00366">
    <property type="entry name" value="RNApol_bact_RpoZ"/>
    <property type="match status" value="1"/>
</dbReference>
<dbReference type="InterPro" id="IPR003716">
    <property type="entry name" value="DNA-dir_RNA_pol_omega"/>
</dbReference>
<dbReference type="InterPro" id="IPR006110">
    <property type="entry name" value="Pol_omega/Rpo6/RPB6"/>
</dbReference>
<dbReference type="InterPro" id="IPR036161">
    <property type="entry name" value="RPB6/omega-like_sf"/>
</dbReference>
<dbReference type="NCBIfam" id="TIGR00690">
    <property type="entry name" value="rpoZ"/>
    <property type="match status" value="1"/>
</dbReference>
<dbReference type="PANTHER" id="PTHR34476">
    <property type="entry name" value="DNA-DIRECTED RNA POLYMERASE SUBUNIT OMEGA"/>
    <property type="match status" value="1"/>
</dbReference>
<dbReference type="PANTHER" id="PTHR34476:SF1">
    <property type="entry name" value="DNA-DIRECTED RNA POLYMERASE SUBUNIT OMEGA"/>
    <property type="match status" value="1"/>
</dbReference>
<dbReference type="Pfam" id="PF01192">
    <property type="entry name" value="RNA_pol_Rpb6"/>
    <property type="match status" value="1"/>
</dbReference>
<dbReference type="SMART" id="SM01409">
    <property type="entry name" value="RNA_pol_Rpb6"/>
    <property type="match status" value="1"/>
</dbReference>
<dbReference type="SUPFAM" id="SSF63562">
    <property type="entry name" value="RPB6/omega subunit-like"/>
    <property type="match status" value="1"/>
</dbReference>
<evidence type="ECO:0000255" key="1">
    <source>
        <dbReference type="HAMAP-Rule" id="MF_00366"/>
    </source>
</evidence>
<gene>
    <name evidence="1" type="primary">rpoZ</name>
    <name type="ordered locus">RL1505</name>
</gene>
<reference key="1">
    <citation type="journal article" date="2006" name="Genome Biol.">
        <title>The genome of Rhizobium leguminosarum has recognizable core and accessory components.</title>
        <authorList>
            <person name="Young J.P.W."/>
            <person name="Crossman L.C."/>
            <person name="Johnston A.W.B."/>
            <person name="Thomson N.R."/>
            <person name="Ghazoui Z.F."/>
            <person name="Hull K.H."/>
            <person name="Wexler M."/>
            <person name="Curson A.R.J."/>
            <person name="Todd J.D."/>
            <person name="Poole P.S."/>
            <person name="Mauchline T.H."/>
            <person name="East A.K."/>
            <person name="Quail M.A."/>
            <person name="Churcher C."/>
            <person name="Arrowsmith C."/>
            <person name="Cherevach I."/>
            <person name="Chillingworth T."/>
            <person name="Clarke K."/>
            <person name="Cronin A."/>
            <person name="Davis P."/>
            <person name="Fraser A."/>
            <person name="Hance Z."/>
            <person name="Hauser H."/>
            <person name="Jagels K."/>
            <person name="Moule S."/>
            <person name="Mungall K."/>
            <person name="Norbertczak H."/>
            <person name="Rabbinowitsch E."/>
            <person name="Sanders M."/>
            <person name="Simmonds M."/>
            <person name="Whitehead S."/>
            <person name="Parkhill J."/>
        </authorList>
    </citation>
    <scope>NUCLEOTIDE SEQUENCE [LARGE SCALE GENOMIC DNA]</scope>
    <source>
        <strain>DSM 114642 / LMG 32736 / 3841</strain>
    </source>
</reference>
<name>RPOZ_RHIJ3</name>
<keyword id="KW-0240">DNA-directed RNA polymerase</keyword>
<keyword id="KW-0548">Nucleotidyltransferase</keyword>
<keyword id="KW-0804">Transcription</keyword>
<keyword id="KW-0808">Transferase</keyword>
<feature type="chain" id="PRO_1000005988" description="DNA-directed RNA polymerase subunit omega">
    <location>
        <begin position="1"/>
        <end position="134"/>
    </location>
</feature>
<sequence length="134" mass="14680">MARVTVEDCIDKVENRFELVLLASHRARLISQGASITIDRDNDKNPVVALREIADETLSPDDLKEDLIHSLQKHVEVDEPEPDPASMIAAGGVAAADGEEQDDVPETITFDQMSEEELLAGIEGLVPPEKSDDY</sequence>
<protein>
    <recommendedName>
        <fullName evidence="1">DNA-directed RNA polymerase subunit omega</fullName>
        <shortName evidence="1">RNAP omega subunit</shortName>
        <ecNumber evidence="1">2.7.7.6</ecNumber>
    </recommendedName>
    <alternativeName>
        <fullName evidence="1">RNA polymerase omega subunit</fullName>
    </alternativeName>
    <alternativeName>
        <fullName evidence="1">Transcriptase subunit omega</fullName>
    </alternativeName>
</protein>
<proteinExistence type="inferred from homology"/>
<accession>Q1MJ60</accession>